<gene>
    <name type="primary">NCKIPSD</name>
    <name type="synonym">AF3P21</name>
    <name type="synonym">SPIN90</name>
</gene>
<name>SPN90_HUMAN</name>
<organism>
    <name type="scientific">Homo sapiens</name>
    <name type="common">Human</name>
    <dbReference type="NCBI Taxonomy" id="9606"/>
    <lineage>
        <taxon>Eukaryota</taxon>
        <taxon>Metazoa</taxon>
        <taxon>Chordata</taxon>
        <taxon>Craniata</taxon>
        <taxon>Vertebrata</taxon>
        <taxon>Euteleostomi</taxon>
        <taxon>Mammalia</taxon>
        <taxon>Eutheria</taxon>
        <taxon>Euarchontoglires</taxon>
        <taxon>Primates</taxon>
        <taxon>Haplorrhini</taxon>
        <taxon>Catarrhini</taxon>
        <taxon>Hominidae</taxon>
        <taxon>Homo</taxon>
    </lineage>
</organism>
<feature type="chain" id="PRO_0000072130" description="NCK-interacting protein with SH3 domain">
    <location>
        <begin position="1"/>
        <end position="722"/>
    </location>
</feature>
<feature type="domain" description="SH3" evidence="4">
    <location>
        <begin position="1"/>
        <end position="58"/>
    </location>
</feature>
<feature type="region of interest" description="Disordered" evidence="5">
    <location>
        <begin position="101"/>
        <end position="122"/>
    </location>
</feature>
<feature type="region of interest" description="Disordered" evidence="5">
    <location>
        <begin position="149"/>
        <end position="286"/>
    </location>
</feature>
<feature type="short sequence motif" description="Nuclear localization signal" evidence="3">
    <location>
        <begin position="175"/>
        <end position="192"/>
    </location>
</feature>
<feature type="compositionally biased region" description="Low complexity" evidence="5">
    <location>
        <begin position="110"/>
        <end position="121"/>
    </location>
</feature>
<feature type="compositionally biased region" description="Pro residues" evidence="5">
    <location>
        <begin position="169"/>
        <end position="185"/>
    </location>
</feature>
<feature type="compositionally biased region" description="Low complexity" evidence="5">
    <location>
        <begin position="206"/>
        <end position="240"/>
    </location>
</feature>
<feature type="site" description="Breakpoint for translocation to form KMT2A/MLL1-AF3P21 oncogene">
    <location>
        <begin position="57"/>
        <end position="58"/>
    </location>
</feature>
<feature type="modified residue" description="Phosphoserine" evidence="2">
    <location>
        <position position="120"/>
    </location>
</feature>
<feature type="modified residue" description="Phosphothreonine" evidence="17">
    <location>
        <position position="181"/>
    </location>
</feature>
<feature type="modified residue" description="Phosphoserine" evidence="2">
    <location>
        <position position="294"/>
    </location>
</feature>
<feature type="splice variant" id="VSP_039422" description="In isoform 3 and isoform 4." evidence="14 15">
    <location>
        <begin position="165"/>
        <end position="171"/>
    </location>
</feature>
<feature type="splice variant" id="VSP_039423" description="In isoform 5." evidence="13">
    <original>AADQNVIMAALSKHANVKIFSEKLLLLLNR</original>
    <variation>GGVGPGWAVAEHMVALRLSTLSIPMSFLSC</variation>
    <location>
        <begin position="567"/>
        <end position="596"/>
    </location>
</feature>
<feature type="splice variant" id="VSP_039424" description="In isoform 5." evidence="13">
    <location>
        <begin position="597"/>
        <end position="722"/>
    </location>
</feature>
<feature type="splice variant" id="VSP_003971" description="In isoform 2." evidence="12">
    <original>LRMEYLSLMHAIVRTTPYLQHRHRLPDLQAILRRILNEEETSPQCQMDRMIVREMCKEFLVLGEAPS</original>
    <variation>GPFGAGQRPWPGVPRLLEPGSTPSREPHPVERSGVPALTSSWASGCPRPLHPALQLVIDSAFGGRSV</variation>
    <location>
        <begin position="656"/>
        <end position="722"/>
    </location>
</feature>
<feature type="splice variant" id="VSP_039425" description="In isoform 4." evidence="14">
    <original>LRM</original>
    <variation>GVH</variation>
    <location>
        <begin position="656"/>
        <end position="658"/>
    </location>
</feature>
<feature type="splice variant" id="VSP_039426" description="In isoform 4." evidence="14">
    <location>
        <begin position="659"/>
        <end position="722"/>
    </location>
</feature>
<feature type="sequence variant" id="VAR_051378" description="In dbSNP:rs6785620.">
    <original>T</original>
    <variation>S</variation>
    <location>
        <position position="324"/>
    </location>
</feature>
<feature type="sequence variant" id="VAR_063400" description="In dbSNP:rs17855516." evidence="9">
    <original>Y</original>
    <variation>S</variation>
    <location>
        <position position="660"/>
    </location>
</feature>
<feature type="helix" evidence="19">
    <location>
        <begin position="312"/>
        <end position="324"/>
    </location>
</feature>
<feature type="helix" evidence="19">
    <location>
        <begin position="328"/>
        <end position="345"/>
    </location>
</feature>
<feature type="helix" evidence="19">
    <location>
        <begin position="350"/>
        <end position="359"/>
    </location>
</feature>
<feature type="helix" evidence="18">
    <location>
        <begin position="377"/>
        <end position="390"/>
    </location>
</feature>
<feature type="helix" evidence="18">
    <location>
        <begin position="401"/>
        <end position="404"/>
    </location>
</feature>
<feature type="helix" evidence="18">
    <location>
        <begin position="407"/>
        <end position="423"/>
    </location>
</feature>
<feature type="helix" evidence="18">
    <location>
        <begin position="426"/>
        <end position="450"/>
    </location>
</feature>
<feature type="helix" evidence="18">
    <location>
        <begin position="454"/>
        <end position="470"/>
    </location>
</feature>
<feature type="helix" evidence="18">
    <location>
        <begin position="472"/>
        <end position="480"/>
    </location>
</feature>
<feature type="helix" evidence="18">
    <location>
        <begin position="483"/>
        <end position="493"/>
    </location>
</feature>
<feature type="helix" evidence="18">
    <location>
        <begin position="498"/>
        <end position="511"/>
    </location>
</feature>
<feature type="turn" evidence="18">
    <location>
        <begin position="512"/>
        <end position="514"/>
    </location>
</feature>
<feature type="helix" evidence="18">
    <location>
        <begin position="520"/>
        <end position="524"/>
    </location>
</feature>
<feature type="helix" evidence="18">
    <location>
        <begin position="528"/>
        <end position="539"/>
    </location>
</feature>
<feature type="helix" evidence="18">
    <location>
        <begin position="550"/>
        <end position="562"/>
    </location>
</feature>
<feature type="strand" evidence="18">
    <location>
        <begin position="568"/>
        <end position="570"/>
    </location>
</feature>
<feature type="helix" evidence="18">
    <location>
        <begin position="572"/>
        <end position="578"/>
    </location>
</feature>
<feature type="helix" evidence="18">
    <location>
        <begin position="584"/>
        <end position="596"/>
    </location>
</feature>
<feature type="helix" evidence="18">
    <location>
        <begin position="613"/>
        <end position="621"/>
    </location>
</feature>
<feature type="helix" evidence="18">
    <location>
        <begin position="625"/>
        <end position="628"/>
    </location>
</feature>
<feature type="helix" evidence="18">
    <location>
        <begin position="633"/>
        <end position="649"/>
    </location>
</feature>
<feature type="helix" evidence="18">
    <location>
        <begin position="657"/>
        <end position="670"/>
    </location>
</feature>
<feature type="helix" evidence="18">
    <location>
        <begin position="673"/>
        <end position="676"/>
    </location>
</feature>
<feature type="helix" evidence="18">
    <location>
        <begin position="680"/>
        <end position="691"/>
    </location>
</feature>
<feature type="helix" evidence="18">
    <location>
        <begin position="698"/>
        <end position="713"/>
    </location>
</feature>
<feature type="helix" evidence="18">
    <location>
        <begin position="715"/>
        <end position="717"/>
    </location>
</feature>
<comment type="function">
    <text evidence="1 11">Has an important role in stress fiber formation induced by active diaphanous protein homolog 1 (DRF1). Induces microspike formation, in vivo (By similarity). In vitro, stimulates N-WASP-induced ARP2/3 complex activation in the absence of CDC42 (By similarity). May play an important role in the maintenance of sarcomeres and/or in the assembly of myofibrils into sarcomeres. Implicated in regulation of actin polymerization and cell adhesion. Plays a role in angiogenesis.</text>
</comment>
<comment type="subunit">
    <text evidence="1 6 8 10 11">Associates with the intermediate filaments, vimentin and desmin. Binds the first and third SH3 domains of NCK. Binds the proline-rich domains of N-WASP through its SH3 domain (By similarity). Similarly, binds diaphanous protein homolog 1 (DRF1). Binds the SH3 domains of GRB2 through its proline-rich domains. Interacts with Helicobacter pylori toxin vacA. Isoform 4 interacts with FHOD1. Interacts with FASLG. Interacts with TMIGD2.</text>
</comment>
<comment type="interaction">
    <interactant intactId="EBI-745080">
        <id>Q9NZQ3</id>
    </interactant>
    <interactant intactId="EBI-525456">
        <id>Q9UQB8</id>
        <label>BAIAP2</label>
    </interactant>
    <organismsDiffer>false</organismsDiffer>
    <experiments>3</experiments>
</comment>
<comment type="interaction">
    <interactant intactId="EBI-745080">
        <id>Q9NZQ3</id>
    </interactant>
    <interactant intactId="EBI-515315">
        <id>P06241</id>
        <label>FYN</label>
    </interactant>
    <organismsDiffer>false</organismsDiffer>
    <experiments>2</experiments>
</comment>
<comment type="interaction">
    <interactant intactId="EBI-745080">
        <id>Q9NZQ3</id>
    </interactant>
    <interactant intactId="EBI-2803991">
        <id>Q8WX93</id>
        <label>PALLD</label>
    </interactant>
    <organismsDiffer>false</organismsDiffer>
    <experiments>3</experiments>
</comment>
<comment type="interaction">
    <interactant intactId="EBI-745080">
        <id>Q9NZQ3</id>
    </interactant>
    <interactant intactId="EBI-750973">
        <id>O00233</id>
        <label>PSMD9</label>
    </interactant>
    <organismsDiffer>false</organismsDiffer>
    <experiments>4</experiments>
</comment>
<comment type="interaction">
    <interactant intactId="EBI-745080">
        <id>Q9NZQ3</id>
    </interactant>
    <interactant intactId="EBI-741237">
        <id>O60504</id>
        <label>SORBS3</label>
    </interactant>
    <organismsDiffer>false</organismsDiffer>
    <experiments>3</experiments>
</comment>
<comment type="interaction">
    <interactant intactId="EBI-745080">
        <id>Q9NZQ3</id>
    </interactant>
    <interactant intactId="EBI-7010040">
        <id>Q60437</id>
        <label>BAIAP2</label>
    </interactant>
    <organismsDiffer>true</organismsDiffer>
    <experiments>3</experiments>
</comment>
<comment type="interaction">
    <interactant intactId="EBI-745080">
        <id>Q9NZQ3</id>
    </interactant>
    <interactant intactId="EBI-1550185">
        <id>Q9Z0W5</id>
        <label>Pacsin1</label>
    </interactant>
    <organismsDiffer>true</organismsDiffer>
    <experiments>6</experiments>
</comment>
<comment type="interaction">
    <interactant intactId="EBI-745080">
        <id>Q9NZQ3</id>
    </interactant>
    <interactant intactId="EBI-491201">
        <id>Q9QY17</id>
        <label>Pacsin2</label>
    </interactant>
    <organismsDiffer>true</organismsDiffer>
    <experiments>2</experiments>
</comment>
<comment type="interaction">
    <interactant intactId="EBI-10963850">
        <id>Q9NZQ3-3</id>
    </interactant>
    <interactant intactId="EBI-11096309">
        <id>Q9NYB9-2</id>
        <label>ABI2</label>
    </interactant>
    <organismsDiffer>false</organismsDiffer>
    <experiments>3</experiments>
</comment>
<comment type="interaction">
    <interactant intactId="EBI-10963850">
        <id>Q9NZQ3-3</id>
    </interactant>
    <interactant intactId="EBI-7097057">
        <id>Q96FN4</id>
        <label>CPNE2</label>
    </interactant>
    <organismsDiffer>false</organismsDiffer>
    <experiments>3</experiments>
</comment>
<comment type="interaction">
    <interactant intactId="EBI-10963850">
        <id>Q9NZQ3-3</id>
    </interactant>
    <interactant intactId="EBI-744099">
        <id>Q9H0I2</id>
        <label>ENKD1</label>
    </interactant>
    <organismsDiffer>false</organismsDiffer>
    <experiments>3</experiments>
</comment>
<comment type="interaction">
    <interactant intactId="EBI-10963850">
        <id>Q9NZQ3-3</id>
    </interactant>
    <interactant intactId="EBI-11745923">
        <id>O60861-1</id>
        <label>GAS7</label>
    </interactant>
    <organismsDiffer>false</organismsDiffer>
    <experiments>5</experiments>
</comment>
<comment type="interaction">
    <interactant intactId="EBI-10963850">
        <id>Q9NZQ3-3</id>
    </interactant>
    <interactant intactId="EBI-720805">
        <id>P56470</id>
        <label>LGALS4</label>
    </interactant>
    <organismsDiffer>false</organismsDiffer>
    <experiments>3</experiments>
</comment>
<comment type="interaction">
    <interactant intactId="EBI-10963850">
        <id>Q9NZQ3-3</id>
    </interactant>
    <interactant intactId="EBI-394558">
        <id>Q71SY5</id>
        <label>MED25</label>
    </interactant>
    <organismsDiffer>false</organismsDiffer>
    <experiments>3</experiments>
</comment>
<comment type="interaction">
    <interactant intactId="EBI-10963850">
        <id>Q9NZQ3-3</id>
    </interactant>
    <interactant intactId="EBI-14086479">
        <id>Q8IVT4</id>
        <label>MGC50722</label>
    </interactant>
    <organismsDiffer>false</organismsDiffer>
    <experiments>3</experiments>
</comment>
<comment type="interaction">
    <interactant intactId="EBI-10963850">
        <id>Q9NZQ3-3</id>
    </interactant>
    <interactant intactId="EBI-713635">
        <id>O43639</id>
        <label>NCK2</label>
    </interactant>
    <organismsDiffer>false</organismsDiffer>
    <experiments>3</experiments>
</comment>
<comment type="interaction">
    <interactant intactId="EBI-10963850">
        <id>Q9NZQ3-3</id>
    </interactant>
    <interactant intactId="EBI-714158">
        <id>Q13526</id>
        <label>PIN1</label>
    </interactant>
    <organismsDiffer>false</organismsDiffer>
    <experiments>3</experiments>
</comment>
<comment type="interaction">
    <interactant intactId="EBI-10963850">
        <id>Q9NZQ3-3</id>
    </interactant>
    <interactant intactId="EBI-10987518">
        <id>Q99959-2</id>
        <label>PKP2</label>
    </interactant>
    <organismsDiffer>false</organismsDiffer>
    <experiments>3</experiments>
</comment>
<comment type="interaction">
    <interactant intactId="EBI-10963850">
        <id>Q9NZQ3-3</id>
    </interactant>
    <interactant intactId="EBI-5452779">
        <id>Q9BUI4</id>
        <label>POLR3C</label>
    </interactant>
    <organismsDiffer>false</organismsDiffer>
    <experiments>3</experiments>
</comment>
<comment type="interaction">
    <interactant intactId="EBI-10963850">
        <id>Q9NZQ3-3</id>
    </interactant>
    <interactant intactId="EBI-1567797">
        <id>Q8WWY3</id>
        <label>PRPF31</label>
    </interactant>
    <organismsDiffer>false</organismsDiffer>
    <experiments>3</experiments>
</comment>
<comment type="interaction">
    <interactant intactId="EBI-10963850">
        <id>Q9NZQ3-3</id>
    </interactant>
    <interactant intactId="EBI-11974061">
        <id>Q9UIG4</id>
        <label>PSORS1C2</label>
    </interactant>
    <organismsDiffer>false</organismsDiffer>
    <experiments>3</experiments>
</comment>
<comment type="interaction">
    <interactant intactId="EBI-10963850">
        <id>Q9NZQ3-3</id>
    </interactant>
    <interactant intactId="EBI-2602260">
        <id>Q9NW64</id>
        <label>RBM22</label>
    </interactant>
    <organismsDiffer>false</organismsDiffer>
    <experiments>5</experiments>
</comment>
<comment type="interaction">
    <interactant intactId="EBI-10963850">
        <id>Q9NZQ3-3</id>
    </interactant>
    <interactant intactId="EBI-2856326">
        <id>Q96R05</id>
        <label>RBP7</label>
    </interactant>
    <organismsDiffer>false</organismsDiffer>
    <experiments>3</experiments>
</comment>
<comment type="interaction">
    <interactant intactId="EBI-10963850">
        <id>Q9NZQ3-3</id>
    </interactant>
    <interactant intactId="EBI-766589">
        <id>P09234</id>
        <label>SNRPC</label>
    </interactant>
    <organismsDiffer>false</organismsDiffer>
    <experiments>3</experiments>
</comment>
<comment type="interaction">
    <interactant intactId="EBI-10963850">
        <id>Q9NZQ3-3</id>
    </interactant>
    <interactant intactId="EBI-2652799">
        <id>Q99469</id>
        <label>STAC</label>
    </interactant>
    <organismsDiffer>false</organismsDiffer>
    <experiments>3</experiments>
</comment>
<comment type="interaction">
    <interactant intactId="EBI-10963850">
        <id>Q9NZQ3-3</id>
    </interactant>
    <interactant intactId="EBI-2559824">
        <id>Q7Z6J9</id>
        <label>TSEN54</label>
    </interactant>
    <organismsDiffer>false</organismsDiffer>
    <experiments>3</experiments>
</comment>
<comment type="interaction">
    <interactant intactId="EBI-10963850">
        <id>Q9NZQ3-3</id>
    </interactant>
    <interactant intactId="EBI-11980193">
        <id>Q14119</id>
        <label>VEZF1</label>
    </interactant>
    <organismsDiffer>false</organismsDiffer>
    <experiments>3</experiments>
</comment>
<comment type="interaction">
    <interactant intactId="EBI-10963850">
        <id>Q9NZQ3-3</id>
    </interactant>
    <interactant intactId="EBI-7781767">
        <id>Q9UFB7</id>
        <label>ZBTB47</label>
    </interactant>
    <organismsDiffer>false</organismsDiffer>
    <experiments>3</experiments>
</comment>
<comment type="interaction">
    <interactant intactId="EBI-10963850">
        <id>Q9NZQ3-3</id>
    </interactant>
    <interactant intactId="EBI-14104088">
        <id>Q53FD0-2</id>
        <label>ZC2HC1C</label>
    </interactant>
    <organismsDiffer>false</organismsDiffer>
    <experiments>3</experiments>
</comment>
<comment type="subcellular location">
    <subcellularLocation>
        <location>Nucleus</location>
    </subcellularLocation>
    <text>Colocalizes with DRF1 at membrane ruffles, and with Nck at Z-disks in mature cardiac myocytes.</text>
</comment>
<comment type="alternative products">
    <event type="alternative splicing"/>
    <isoform>
        <id>Q9NZQ3-1</id>
        <name>1</name>
        <sequence type="displayed"/>
    </isoform>
    <isoform>
        <id>Q9NZQ3-2</id>
        <name>2</name>
        <sequence type="described" ref="VSP_003971"/>
    </isoform>
    <isoform>
        <id>Q9NZQ3-3</id>
        <name>3</name>
        <sequence type="described" ref="VSP_039422"/>
    </isoform>
    <isoform>
        <id>Q9NZQ3-4</id>
        <name>4</name>
        <name>WISH-B</name>
        <sequence type="described" ref="VSP_039422 VSP_039425 VSP_039426"/>
    </isoform>
    <isoform>
        <id>Q9NZQ3-5</id>
        <name>5</name>
        <sequence type="described" ref="VSP_039423 VSP_039424"/>
    </isoform>
</comment>
<comment type="tissue specificity">
    <text evidence="6">Highest expression in heart, brain, skeletal muscle, kidney and liver. Lower levels in placenta, lung, small intestine and leukocytes. Weak expression in colon, thymus and spleen.</text>
</comment>
<comment type="disease">
    <text evidence="7">A chromosomal aberration involving NCKIPSD/AF3p21 is found in therapy-related leukemia. Translocation t(3;11)(p21;q23) with KMT2A/MLL1.</text>
</comment>
<comment type="miscellaneous">
    <molecule>Isoform 5</molecule>
    <text evidence="16">Found in a brain affected by Alzheimer disease. May be due to intron retention.</text>
</comment>
<comment type="sequence caution" evidence="16">
    <conflict type="erroneous initiation">
        <sequence resource="EMBL-CDS" id="BAG57476"/>
    </conflict>
    <text>Truncated N-terminus.</text>
</comment>
<comment type="online information" name="Atlas of Genetics and Cytogenetics in Oncology and Haematology">
    <link uri="https://atlasgeneticsoncology.org/gene/228/AF3p21"/>
</comment>
<evidence type="ECO:0000250" key="1"/>
<evidence type="ECO:0000250" key="2">
    <source>
        <dbReference type="UniProtKB" id="Q9ESJ4"/>
    </source>
</evidence>
<evidence type="ECO:0000255" key="3"/>
<evidence type="ECO:0000255" key="4">
    <source>
        <dbReference type="PROSITE-ProRule" id="PRU00192"/>
    </source>
</evidence>
<evidence type="ECO:0000256" key="5">
    <source>
        <dbReference type="SAM" id="MobiDB-lite"/>
    </source>
</evidence>
<evidence type="ECO:0000269" key="6">
    <source>
    </source>
</evidence>
<evidence type="ECO:0000269" key="7">
    <source>
    </source>
</evidence>
<evidence type="ECO:0000269" key="8">
    <source>
    </source>
</evidence>
<evidence type="ECO:0000269" key="9">
    <source>
    </source>
</evidence>
<evidence type="ECO:0000269" key="10">
    <source>
    </source>
</evidence>
<evidence type="ECO:0000269" key="11">
    <source>
    </source>
</evidence>
<evidence type="ECO:0000303" key="12">
    <source>
    </source>
</evidence>
<evidence type="ECO:0000303" key="13">
    <source>
    </source>
</evidence>
<evidence type="ECO:0000303" key="14">
    <source>
    </source>
</evidence>
<evidence type="ECO:0000303" key="15">
    <source>
    </source>
</evidence>
<evidence type="ECO:0000305" key="16"/>
<evidence type="ECO:0007744" key="17">
    <source>
    </source>
</evidence>
<evidence type="ECO:0007829" key="18">
    <source>
        <dbReference type="PDB" id="6DED"/>
    </source>
</evidence>
<evidence type="ECO:0007829" key="19">
    <source>
        <dbReference type="PDB" id="6DEE"/>
    </source>
</evidence>
<keyword id="KW-0002">3D-structure</keyword>
<keyword id="KW-0025">Alternative splicing</keyword>
<keyword id="KW-0160">Chromosomal rearrangement</keyword>
<keyword id="KW-0539">Nucleus</keyword>
<keyword id="KW-0597">Phosphoprotein</keyword>
<keyword id="KW-1267">Proteomics identification</keyword>
<keyword id="KW-0656">Proto-oncogene</keyword>
<keyword id="KW-1185">Reference proteome</keyword>
<keyword id="KW-0728">SH3 domain</keyword>
<keyword id="KW-0729">SH3-binding</keyword>
<accession>Q9NZQ3</accession>
<accession>B4DFL5</accession>
<accession>Q6GU34</accession>
<accession>Q6SPF3</accession>
<accession>Q8TC10</accession>
<accession>Q9UGM8</accession>
<proteinExistence type="evidence at protein level"/>
<reference key="1">
    <citation type="journal article" date="2000" name="Blood">
        <title>Novel SH3 protein encoded by the AF3p21 gene is fused to the mixed lineage leukemia protein in a therapy-related leukemia with t(3;11)(p21;q23).</title>
        <authorList>
            <person name="Sano K."/>
            <person name="Hayakawa A."/>
            <person name="Piao J.-H."/>
            <person name="Kosaka Y."/>
            <person name="Nakamura H."/>
        </authorList>
    </citation>
    <scope>NUCLEOTIDE SEQUENCE [MRNA] (ISOFORM 1)</scope>
    <scope>CHROMOSOMAL TRANSLOCATION WITH KMT2A/MLL1</scope>
    <source>
        <tissue>Leukemia</tissue>
    </source>
</reference>
<reference key="2">
    <citation type="journal article" date="2000" name="EMBO J.">
        <title>The VacA toxin of Helicobacter pylori identifies a new intermediate filament-interacting protein.</title>
        <authorList>
            <person name="de Bernard M."/>
            <person name="Moschioni M."/>
            <person name="Napolitani G."/>
            <person name="Rappuoli R."/>
            <person name="Montecucco C."/>
        </authorList>
    </citation>
    <scope>NUCLEOTIDE SEQUENCE [MRNA] (ISOFORM 2)</scope>
    <scope>INTERACTION WITH VACA</scope>
    <scope>TISSUE SPECIFICITY</scope>
    <source>
        <tissue>Cervix carcinoma</tissue>
    </source>
</reference>
<reference key="3">
    <citation type="journal article" date="2001" name="Genes Chromosomes Cancer">
        <title>Genomic organization, tissue expression and cellular localization of AF3p21, a fusion partner of MLL in therapy-related leukemia.</title>
        <authorList>
            <person name="Hayakawa A."/>
            <person name="Matsuda Y."/>
            <person name="Daibata M."/>
            <person name="Nakamura H."/>
            <person name="Sano K."/>
        </authorList>
    </citation>
    <scope>NUCLEOTIDE SEQUENCE [GENOMIC DNA] (ISOFORM 1)</scope>
    <source>
        <tissue>Cervix carcinoma</tissue>
    </source>
</reference>
<reference key="4">
    <citation type="journal article" date="2001" name="J. Biol. Chem.">
        <title>SPIN90 (SH3 protein interacting with Nck, 90 kDa), an adapter protein that is developmentally regulated during cardiac myocyte differentiation.</title>
        <authorList>
            <person name="Lim C.S."/>
            <person name="Park E.S."/>
            <person name="Kim D.J."/>
            <person name="Song Y.H."/>
            <person name="Eom S.H."/>
            <person name="Chun J.-S."/>
            <person name="Kim J.H."/>
            <person name="Kim J.-K."/>
            <person name="Park D."/>
            <person name="Song W.K."/>
        </authorList>
    </citation>
    <scope>NUCLEOTIDE SEQUENCE [MRNA] (ISOFORM 1)</scope>
    <source>
        <tissue>Heart</tissue>
    </source>
</reference>
<reference key="5">
    <citation type="journal article" date="2001" name="J. Biol. Chem.">
        <title>mDia-interacting protein acts downstream of rho-mDia and modifies src activation and stress fiber formation.</title>
        <authorList>
            <person name="Satoh S."/>
            <person name="Tominaga T."/>
        </authorList>
    </citation>
    <scope>NUCLEOTIDE SEQUENCE [GENOMIC DNA]</scope>
    <scope>ALTERNATIVE SPLICING (ISOFORMS 1 AND 2)</scope>
    <source>
        <tissue>Brain</tissue>
        <tissue>Placenta</tissue>
    </source>
</reference>
<reference key="6">
    <citation type="journal article" date="2004" name="J. Cell. Biochem.">
        <title>Identification of FHOD1-binding proteins and mechanisms of FHOD1-regulated actin dynamics.</title>
        <authorList>
            <person name="Westendorf J.J."/>
            <person name="Koka S."/>
        </authorList>
    </citation>
    <scope>NUCLEOTIDE SEQUENCE [MRNA] (ISOFORM 4)</scope>
    <scope>INTERACTION WITH FHOD1</scope>
    <source>
        <tissue>Bone marrow</tissue>
    </source>
</reference>
<reference key="7">
    <citation type="journal article" date="2006" name="Nature">
        <title>The DNA sequence, annotation and analysis of human chromosome 3.</title>
        <authorList>
            <person name="Muzny D.M."/>
            <person name="Scherer S.E."/>
            <person name="Kaul R."/>
            <person name="Wang J."/>
            <person name="Yu J."/>
            <person name="Sudbrak R."/>
            <person name="Buhay C.J."/>
            <person name="Chen R."/>
            <person name="Cree A."/>
            <person name="Ding Y."/>
            <person name="Dugan-Rocha S."/>
            <person name="Gill R."/>
            <person name="Gunaratne P."/>
            <person name="Harris R.A."/>
            <person name="Hawes A.C."/>
            <person name="Hernandez J."/>
            <person name="Hodgson A.V."/>
            <person name="Hume J."/>
            <person name="Jackson A."/>
            <person name="Khan Z.M."/>
            <person name="Kovar-Smith C."/>
            <person name="Lewis L.R."/>
            <person name="Lozado R.J."/>
            <person name="Metzker M.L."/>
            <person name="Milosavljevic A."/>
            <person name="Miner G.R."/>
            <person name="Morgan M.B."/>
            <person name="Nazareth L.V."/>
            <person name="Scott G."/>
            <person name="Sodergren E."/>
            <person name="Song X.-Z."/>
            <person name="Steffen D."/>
            <person name="Wei S."/>
            <person name="Wheeler D.A."/>
            <person name="Wright M.W."/>
            <person name="Worley K.C."/>
            <person name="Yuan Y."/>
            <person name="Zhang Z."/>
            <person name="Adams C.Q."/>
            <person name="Ansari-Lari M.A."/>
            <person name="Ayele M."/>
            <person name="Brown M.J."/>
            <person name="Chen G."/>
            <person name="Chen Z."/>
            <person name="Clendenning J."/>
            <person name="Clerc-Blankenburg K.P."/>
            <person name="Chen R."/>
            <person name="Chen Z."/>
            <person name="Davis C."/>
            <person name="Delgado O."/>
            <person name="Dinh H.H."/>
            <person name="Dong W."/>
            <person name="Draper H."/>
            <person name="Ernst S."/>
            <person name="Fu G."/>
            <person name="Gonzalez-Garay M.L."/>
            <person name="Garcia D.K."/>
            <person name="Gillett W."/>
            <person name="Gu J."/>
            <person name="Hao B."/>
            <person name="Haugen E."/>
            <person name="Havlak P."/>
            <person name="He X."/>
            <person name="Hennig S."/>
            <person name="Hu S."/>
            <person name="Huang W."/>
            <person name="Jackson L.R."/>
            <person name="Jacob L.S."/>
            <person name="Kelly S.H."/>
            <person name="Kube M."/>
            <person name="Levy R."/>
            <person name="Li Z."/>
            <person name="Liu B."/>
            <person name="Liu J."/>
            <person name="Liu W."/>
            <person name="Lu J."/>
            <person name="Maheshwari M."/>
            <person name="Nguyen B.-V."/>
            <person name="Okwuonu G.O."/>
            <person name="Palmeiri A."/>
            <person name="Pasternak S."/>
            <person name="Perez L.M."/>
            <person name="Phelps K.A."/>
            <person name="Plopper F.J."/>
            <person name="Qiang B."/>
            <person name="Raymond C."/>
            <person name="Rodriguez R."/>
            <person name="Saenphimmachak C."/>
            <person name="Santibanez J."/>
            <person name="Shen H."/>
            <person name="Shen Y."/>
            <person name="Subramanian S."/>
            <person name="Tabor P.E."/>
            <person name="Verduzco D."/>
            <person name="Waldron L."/>
            <person name="Wang J."/>
            <person name="Wang J."/>
            <person name="Wang Q."/>
            <person name="Williams G.A."/>
            <person name="Wong G.K.-S."/>
            <person name="Yao Z."/>
            <person name="Zhang J."/>
            <person name="Zhang X."/>
            <person name="Zhao G."/>
            <person name="Zhou J."/>
            <person name="Zhou Y."/>
            <person name="Nelson D."/>
            <person name="Lehrach H."/>
            <person name="Reinhardt R."/>
            <person name="Naylor S.L."/>
            <person name="Yang H."/>
            <person name="Olson M."/>
            <person name="Weinstock G."/>
            <person name="Gibbs R.A."/>
        </authorList>
    </citation>
    <scope>NUCLEOTIDE SEQUENCE [LARGE SCALE GENOMIC DNA]</scope>
</reference>
<reference key="8">
    <citation type="journal article" date="2004" name="Genome Res.">
        <title>The status, quality, and expansion of the NIH full-length cDNA project: the Mammalian Gene Collection (MGC).</title>
        <authorList>
            <consortium name="The MGC Project Team"/>
        </authorList>
    </citation>
    <scope>NUCLEOTIDE SEQUENCE [LARGE SCALE MRNA] (ISOFORM 3)</scope>
    <scope>VARIANT SER-660</scope>
    <source>
        <tissue>Placenta</tissue>
        <tissue>Skin</tissue>
    </source>
</reference>
<reference key="9">
    <citation type="journal article" date="2004" name="Nat. Genet.">
        <title>Complete sequencing and characterization of 21,243 full-length human cDNAs.</title>
        <authorList>
            <person name="Ota T."/>
            <person name="Suzuki Y."/>
            <person name="Nishikawa T."/>
            <person name="Otsuki T."/>
            <person name="Sugiyama T."/>
            <person name="Irie R."/>
            <person name="Wakamatsu A."/>
            <person name="Hayashi K."/>
            <person name="Sato H."/>
            <person name="Nagai K."/>
            <person name="Kimura K."/>
            <person name="Makita H."/>
            <person name="Sekine M."/>
            <person name="Obayashi M."/>
            <person name="Nishi T."/>
            <person name="Shibahara T."/>
            <person name="Tanaka T."/>
            <person name="Ishii S."/>
            <person name="Yamamoto J."/>
            <person name="Saito K."/>
            <person name="Kawai Y."/>
            <person name="Isono Y."/>
            <person name="Nakamura Y."/>
            <person name="Nagahari K."/>
            <person name="Murakami K."/>
            <person name="Yasuda T."/>
            <person name="Iwayanagi T."/>
            <person name="Wagatsuma M."/>
            <person name="Shiratori A."/>
            <person name="Sudo H."/>
            <person name="Hosoiri T."/>
            <person name="Kaku Y."/>
            <person name="Kodaira H."/>
            <person name="Kondo H."/>
            <person name="Sugawara M."/>
            <person name="Takahashi M."/>
            <person name="Kanda K."/>
            <person name="Yokoi T."/>
            <person name="Furuya T."/>
            <person name="Kikkawa E."/>
            <person name="Omura Y."/>
            <person name="Abe K."/>
            <person name="Kamihara K."/>
            <person name="Katsuta N."/>
            <person name="Sato K."/>
            <person name="Tanikawa M."/>
            <person name="Yamazaki M."/>
            <person name="Ninomiya K."/>
            <person name="Ishibashi T."/>
            <person name="Yamashita H."/>
            <person name="Murakawa K."/>
            <person name="Fujimori K."/>
            <person name="Tanai H."/>
            <person name="Kimata M."/>
            <person name="Watanabe M."/>
            <person name="Hiraoka S."/>
            <person name="Chiba Y."/>
            <person name="Ishida S."/>
            <person name="Ono Y."/>
            <person name="Takiguchi S."/>
            <person name="Watanabe S."/>
            <person name="Yosida M."/>
            <person name="Hotuta T."/>
            <person name="Kusano J."/>
            <person name="Kanehori K."/>
            <person name="Takahashi-Fujii A."/>
            <person name="Hara H."/>
            <person name="Tanase T.-O."/>
            <person name="Nomura Y."/>
            <person name="Togiya S."/>
            <person name="Komai F."/>
            <person name="Hara R."/>
            <person name="Takeuchi K."/>
            <person name="Arita M."/>
            <person name="Imose N."/>
            <person name="Musashino K."/>
            <person name="Yuuki H."/>
            <person name="Oshima A."/>
            <person name="Sasaki N."/>
            <person name="Aotsuka S."/>
            <person name="Yoshikawa Y."/>
            <person name="Matsunawa H."/>
            <person name="Ichihara T."/>
            <person name="Shiohata N."/>
            <person name="Sano S."/>
            <person name="Moriya S."/>
            <person name="Momiyama H."/>
            <person name="Satoh N."/>
            <person name="Takami S."/>
            <person name="Terashima Y."/>
            <person name="Suzuki O."/>
            <person name="Nakagawa S."/>
            <person name="Senoh A."/>
            <person name="Mizoguchi H."/>
            <person name="Goto Y."/>
            <person name="Shimizu F."/>
            <person name="Wakebe H."/>
            <person name="Hishigaki H."/>
            <person name="Watanabe T."/>
            <person name="Sugiyama A."/>
            <person name="Takemoto M."/>
            <person name="Kawakami B."/>
            <person name="Yamazaki M."/>
            <person name="Watanabe K."/>
            <person name="Kumagai A."/>
            <person name="Itakura S."/>
            <person name="Fukuzumi Y."/>
            <person name="Fujimori Y."/>
            <person name="Komiyama M."/>
            <person name="Tashiro H."/>
            <person name="Tanigami A."/>
            <person name="Fujiwara T."/>
            <person name="Ono T."/>
            <person name="Yamada K."/>
            <person name="Fujii Y."/>
            <person name="Ozaki K."/>
            <person name="Hirao M."/>
            <person name="Ohmori Y."/>
            <person name="Kawabata A."/>
            <person name="Hikiji T."/>
            <person name="Kobatake N."/>
            <person name="Inagaki H."/>
            <person name="Ikema Y."/>
            <person name="Okamoto S."/>
            <person name="Okitani R."/>
            <person name="Kawakami T."/>
            <person name="Noguchi S."/>
            <person name="Itoh T."/>
            <person name="Shigeta K."/>
            <person name="Senba T."/>
            <person name="Matsumura K."/>
            <person name="Nakajima Y."/>
            <person name="Mizuno T."/>
            <person name="Morinaga M."/>
            <person name="Sasaki M."/>
            <person name="Togashi T."/>
            <person name="Oyama M."/>
            <person name="Hata H."/>
            <person name="Watanabe M."/>
            <person name="Komatsu T."/>
            <person name="Mizushima-Sugano J."/>
            <person name="Satoh T."/>
            <person name="Shirai Y."/>
            <person name="Takahashi Y."/>
            <person name="Nakagawa K."/>
            <person name="Okumura K."/>
            <person name="Nagase T."/>
            <person name="Nomura N."/>
            <person name="Kikuchi H."/>
            <person name="Masuho Y."/>
            <person name="Yamashita R."/>
            <person name="Nakai K."/>
            <person name="Yada T."/>
            <person name="Nakamura Y."/>
            <person name="Ohara O."/>
            <person name="Isogai T."/>
            <person name="Sugano S."/>
        </authorList>
    </citation>
    <scope>NUCLEOTIDE SEQUENCE [LARGE SCALE MRNA] OF 448-722 (ISOFORM 5)</scope>
    <source>
        <tissue>Brain cortex</tissue>
    </source>
</reference>
<reference key="10">
    <citation type="journal article" date="2008" name="J. Proteome Res.">
        <title>Phosphoproteome of resting human platelets.</title>
        <authorList>
            <person name="Zahedi R.P."/>
            <person name="Lewandrowski U."/>
            <person name="Wiesner J."/>
            <person name="Wortelkamp S."/>
            <person name="Moebius J."/>
            <person name="Schuetz C."/>
            <person name="Walter U."/>
            <person name="Gambaryan S."/>
            <person name="Sickmann A."/>
        </authorList>
    </citation>
    <scope>IDENTIFICATION BY MASS SPECTROMETRY [LARGE SCALE ANALYSIS]</scope>
    <source>
        <tissue>Platelet</tissue>
    </source>
</reference>
<reference key="11">
    <citation type="journal article" date="2009" name="BMC Immunol.">
        <title>Identification of SH3 domain interaction partners of human FasL (CD178) by phage display screening.</title>
        <authorList>
            <person name="Voss M."/>
            <person name="Lettau M."/>
            <person name="Janssen O."/>
        </authorList>
    </citation>
    <scope>INTERACTION WITH FASLG</scope>
</reference>
<reference key="12">
    <citation type="journal article" date="2011" name="BMC Syst. Biol.">
        <title>Initial characterization of the human central proteome.</title>
        <authorList>
            <person name="Burkard T.R."/>
            <person name="Planyavsky M."/>
            <person name="Kaupe I."/>
            <person name="Breitwieser F.P."/>
            <person name="Buerckstuemmer T."/>
            <person name="Bennett K.L."/>
            <person name="Superti-Furga G."/>
            <person name="Colinge J."/>
        </authorList>
    </citation>
    <scope>IDENTIFICATION BY MASS SPECTROMETRY [LARGE SCALE ANALYSIS]</scope>
</reference>
<reference key="13">
    <citation type="journal article" date="2012" name="Mol. Biol. Cell">
        <title>Identification of IGPR-1 as a novel adhesion molecule involved in angiogenesis.</title>
        <authorList>
            <person name="Rahimi N."/>
            <person name="Rezazadeh K."/>
            <person name="Mahoney J.E."/>
            <person name="Hartsough E."/>
            <person name="Meyer R.D."/>
        </authorList>
    </citation>
    <scope>FUNCTION IN ANGIOGENESIS</scope>
    <scope>INTERACTION WITH TMIGD2</scope>
</reference>
<reference key="14">
    <citation type="journal article" date="2013" name="J. Proteome Res.">
        <title>Toward a comprehensive characterization of a human cancer cell phosphoproteome.</title>
        <authorList>
            <person name="Zhou H."/>
            <person name="Di Palma S."/>
            <person name="Preisinger C."/>
            <person name="Peng M."/>
            <person name="Polat A.N."/>
            <person name="Heck A.J."/>
            <person name="Mohammed S."/>
        </authorList>
    </citation>
    <scope>PHOSPHORYLATION [LARGE SCALE ANALYSIS] AT THR-181</scope>
    <scope>IDENTIFICATION BY MASS SPECTROMETRY [LARGE SCALE ANALYSIS]</scope>
    <source>
        <tissue>Cervix carcinoma</tissue>
        <tissue>Erythroleukemia</tissue>
    </source>
</reference>
<reference key="15">
    <citation type="journal article" date="2014" name="J. Proteomics">
        <title>An enzyme assisted RP-RPLC approach for in-depth analysis of human liver phosphoproteome.</title>
        <authorList>
            <person name="Bian Y."/>
            <person name="Song C."/>
            <person name="Cheng K."/>
            <person name="Dong M."/>
            <person name="Wang F."/>
            <person name="Huang J."/>
            <person name="Sun D."/>
            <person name="Wang L."/>
            <person name="Ye M."/>
            <person name="Zou H."/>
        </authorList>
    </citation>
    <scope>IDENTIFICATION BY MASS SPECTROMETRY [LARGE SCALE ANALYSIS]</scope>
    <source>
        <tissue>Liver</tissue>
    </source>
</reference>
<protein>
    <recommendedName>
        <fullName>NCK-interacting protein with SH3 domain</fullName>
    </recommendedName>
    <alternativeName>
        <fullName>54 kDa VacA-interacting protein</fullName>
    </alternativeName>
    <alternativeName>
        <fullName>54 kDa vimentin-interacting protein</fullName>
        <shortName>VIP54</shortName>
    </alternativeName>
    <alternativeName>
        <fullName>90 kDa SH3 protein interacting with Nck</fullName>
    </alternativeName>
    <alternativeName>
        <fullName>AF3p21</fullName>
    </alternativeName>
    <alternativeName>
        <fullName>Dia-interacting protein 1</fullName>
        <shortName>DIP-1</shortName>
    </alternativeName>
    <alternativeName>
        <fullName>Diaphanous protein-interacting protein</fullName>
    </alternativeName>
    <alternativeName>
        <fullName>SH3 adapter protein SPIN90</fullName>
    </alternativeName>
    <alternativeName>
        <fullName>WASP-interacting SH3-domain protein</fullName>
        <shortName>WISH</shortName>
    </alternativeName>
    <alternativeName>
        <fullName>Wiskott-Aldrich syndrome protein-interacting protein</fullName>
    </alternativeName>
</protein>
<sequence length="722" mass="78960">MYRALYAFRSAEPNALAFAAGETFLVLERSSAHWWLAARARSGETGYVPPAYLRRLQGLEQDVLQAIDRAIEAVHNTAMRDGGKYSLEQRGVLQKLIHHRKETLSRRGPSASSVAVMTSSTSDHHLDAAAARQPNGVCRAGFERQHSLPSSEHLGADGGLYQIPLPSSQIPPQPRRAAPTTPPPPVKRRDREALMASGSGGHNTMPSGGNSVSSGSSVSSTSLDTLYTSSSPSEPGSSCSPTPPPVPRRGTHTTVSQVQPPPSKASAPEPPAEEEVATGTTSASDDLEALGTLSLGTTEEKAAAEAAVPRTIGAELMELVRRNTGLSHELCRVAIGIIVGHIQASVPASSPVMEQVLLSLVEGKDLSMALPSGQVCHDQQRLEVIFADLARRKDDAQQRSWALYEDEGVIRCYLEELLHILTDADPEVCKKMCKRNEFESVLALVAYYQMEHRASLRLLLLKCFGAMCSLDAAIISTLVSSVLPVELARDMQTDTQDHQKLCYSALILAMVFSMGEAVPYAHYEHLGTPFAQFLLNIVEDGLPLDTTEQLPDLCVNLLLALNLHLPAADQNVIMAALSKHANVKIFSEKLLLLLNRGDDPVRIFKHEPQPPHSVLKFLQDVFGSPATAAIFYHTDMMALIDITVRHIADLSPGDKLRMEYLSLMHAIVRTTPYLQHRHRLPDLQAILRRILNEEETSPQCQMDRMIVREMCKEFLVLGEAPS</sequence>
<dbReference type="EMBL" id="AF178432">
    <property type="protein sequence ID" value="AAF35985.1"/>
    <property type="molecule type" value="mRNA"/>
</dbReference>
<dbReference type="EMBL" id="AJ242655">
    <property type="protein sequence ID" value="CAB65089.2"/>
    <property type="molecule type" value="mRNA"/>
</dbReference>
<dbReference type="EMBL" id="AF303581">
    <property type="protein sequence ID" value="AAK09094.1"/>
    <property type="molecule type" value="mRNA"/>
</dbReference>
<dbReference type="EMBL" id="AB069981">
    <property type="protein sequence ID" value="BAB63204.1"/>
    <property type="molecule type" value="Genomic_DNA"/>
</dbReference>
<dbReference type="EMBL" id="AB069982">
    <property type="protein sequence ID" value="BAB63205.1"/>
    <property type="molecule type" value="Genomic_DNA"/>
</dbReference>
<dbReference type="EMBL" id="AY453794">
    <property type="protein sequence ID" value="AAR83735.1"/>
    <property type="molecule type" value="mRNA"/>
</dbReference>
<dbReference type="EMBL" id="AC141002">
    <property type="status" value="NOT_ANNOTATED_CDS"/>
    <property type="molecule type" value="Genomic_DNA"/>
</dbReference>
<dbReference type="EMBL" id="BC016052">
    <property type="protein sequence ID" value="AAH16052.1"/>
    <property type="molecule type" value="mRNA"/>
</dbReference>
<dbReference type="EMBL" id="BC026280">
    <property type="protein sequence ID" value="AAH26280.1"/>
    <property type="molecule type" value="mRNA"/>
</dbReference>
<dbReference type="EMBL" id="AK294151">
    <property type="protein sequence ID" value="BAG57476.1"/>
    <property type="status" value="ALT_INIT"/>
    <property type="molecule type" value="mRNA"/>
</dbReference>
<dbReference type="CCDS" id="CCDS2776.1">
    <molecule id="Q9NZQ3-1"/>
</dbReference>
<dbReference type="CCDS" id="CCDS46827.1">
    <molecule id="Q9NZQ3-3"/>
</dbReference>
<dbReference type="RefSeq" id="NP_057537.1">
    <molecule id="Q9NZQ3-1"/>
    <property type="nucleotide sequence ID" value="NM_016453.4"/>
</dbReference>
<dbReference type="RefSeq" id="NP_909119.1">
    <molecule id="Q9NZQ3-3"/>
    <property type="nucleotide sequence ID" value="NM_184231.3"/>
</dbReference>
<dbReference type="PDB" id="6DEC">
    <property type="method" value="X-ray"/>
    <property type="resolution" value="4.60 A"/>
    <property type="chains" value="M/P=269-722"/>
</dbReference>
<dbReference type="PDB" id="6DED">
    <property type="method" value="X-ray"/>
    <property type="resolution" value="2.20 A"/>
    <property type="chains" value="A/B=350-722"/>
</dbReference>
<dbReference type="PDB" id="6DEE">
    <property type="method" value="X-ray"/>
    <property type="resolution" value="3.04 A"/>
    <property type="chains" value="A=306-722"/>
</dbReference>
<dbReference type="PDBsum" id="6DEC"/>
<dbReference type="PDBsum" id="6DED"/>
<dbReference type="PDBsum" id="6DEE"/>
<dbReference type="SMR" id="Q9NZQ3"/>
<dbReference type="BioGRID" id="119583">
    <property type="interactions" value="138"/>
</dbReference>
<dbReference type="FunCoup" id="Q9NZQ3">
    <property type="interactions" value="682"/>
</dbReference>
<dbReference type="IntAct" id="Q9NZQ3">
    <property type="interactions" value="108"/>
</dbReference>
<dbReference type="MINT" id="Q9NZQ3"/>
<dbReference type="STRING" id="9606.ENSP00000294129"/>
<dbReference type="GlyCosmos" id="Q9NZQ3">
    <property type="glycosylation" value="1 site, 1 glycan"/>
</dbReference>
<dbReference type="GlyGen" id="Q9NZQ3">
    <property type="glycosylation" value="2 sites, 1 O-linked glycan (1 site)"/>
</dbReference>
<dbReference type="iPTMnet" id="Q9NZQ3"/>
<dbReference type="MetOSite" id="Q9NZQ3"/>
<dbReference type="PhosphoSitePlus" id="Q9NZQ3"/>
<dbReference type="BioMuta" id="NCKIPSD"/>
<dbReference type="DMDM" id="17433253"/>
<dbReference type="jPOST" id="Q9NZQ3"/>
<dbReference type="MassIVE" id="Q9NZQ3"/>
<dbReference type="PaxDb" id="9606-ENSP00000294129"/>
<dbReference type="PeptideAtlas" id="Q9NZQ3"/>
<dbReference type="ProteomicsDB" id="83478">
    <molecule id="Q9NZQ3-1"/>
</dbReference>
<dbReference type="ProteomicsDB" id="83479">
    <molecule id="Q9NZQ3-2"/>
</dbReference>
<dbReference type="ProteomicsDB" id="83480">
    <molecule id="Q9NZQ3-3"/>
</dbReference>
<dbReference type="ProteomicsDB" id="83481">
    <molecule id="Q9NZQ3-4"/>
</dbReference>
<dbReference type="ProteomicsDB" id="83482">
    <molecule id="Q9NZQ3-5"/>
</dbReference>
<dbReference type="Pumba" id="Q9NZQ3"/>
<dbReference type="Antibodypedia" id="30227">
    <property type="antibodies" value="133 antibodies from 27 providers"/>
</dbReference>
<dbReference type="DNASU" id="51517"/>
<dbReference type="Ensembl" id="ENST00000294129.7">
    <molecule id="Q9NZQ3-1"/>
    <property type="protein sequence ID" value="ENSP00000294129.2"/>
    <property type="gene ID" value="ENSG00000213672.8"/>
</dbReference>
<dbReference type="Ensembl" id="ENST00000416649.6">
    <molecule id="Q9NZQ3-3"/>
    <property type="protein sequence ID" value="ENSP00000389059.2"/>
    <property type="gene ID" value="ENSG00000213672.8"/>
</dbReference>
<dbReference type="GeneID" id="51517"/>
<dbReference type="KEGG" id="hsa:51517"/>
<dbReference type="MANE-Select" id="ENST00000294129.7">
    <property type="protein sequence ID" value="ENSP00000294129.2"/>
    <property type="RefSeq nucleotide sequence ID" value="NM_016453.4"/>
    <property type="RefSeq protein sequence ID" value="NP_057537.1"/>
</dbReference>
<dbReference type="UCSC" id="uc003cum.5">
    <molecule id="Q9NZQ3-1"/>
    <property type="organism name" value="human"/>
</dbReference>
<dbReference type="AGR" id="HGNC:15486"/>
<dbReference type="CTD" id="51517"/>
<dbReference type="DisGeNET" id="51517"/>
<dbReference type="GeneCards" id="NCKIPSD"/>
<dbReference type="HGNC" id="HGNC:15486">
    <property type="gene designation" value="NCKIPSD"/>
</dbReference>
<dbReference type="HPA" id="ENSG00000213672">
    <property type="expression patterns" value="Tissue enhanced (parathyroid)"/>
</dbReference>
<dbReference type="MIM" id="606671">
    <property type="type" value="gene"/>
</dbReference>
<dbReference type="neXtProt" id="NX_Q9NZQ3"/>
<dbReference type="OpenTargets" id="ENSG00000213672"/>
<dbReference type="PharmGKB" id="PA134872724"/>
<dbReference type="VEuPathDB" id="HostDB:ENSG00000213672"/>
<dbReference type="eggNOG" id="KOG4035">
    <property type="taxonomic scope" value="Eukaryota"/>
</dbReference>
<dbReference type="GeneTree" id="ENSGT00390000015725"/>
<dbReference type="HOGENOM" id="CLU_012978_1_0_1"/>
<dbReference type="InParanoid" id="Q9NZQ3"/>
<dbReference type="OMA" id="CFARIFC"/>
<dbReference type="OrthoDB" id="445362at2759"/>
<dbReference type="PAN-GO" id="Q9NZQ3">
    <property type="GO annotations" value="2 GO annotations based on evolutionary models"/>
</dbReference>
<dbReference type="PhylomeDB" id="Q9NZQ3"/>
<dbReference type="TreeFam" id="TF324522"/>
<dbReference type="PathwayCommons" id="Q9NZQ3"/>
<dbReference type="Reactome" id="R-HSA-2029482">
    <property type="pathway name" value="Regulation of actin dynamics for phagocytic cup formation"/>
</dbReference>
<dbReference type="Reactome" id="R-HSA-5663213">
    <property type="pathway name" value="RHO GTPases Activate WASPs and WAVEs"/>
</dbReference>
<dbReference type="Reactome" id="R-HSA-9664422">
    <property type="pathway name" value="FCGR3A-mediated phagocytosis"/>
</dbReference>
<dbReference type="SignaLink" id="Q9NZQ3"/>
<dbReference type="SIGNOR" id="Q9NZQ3"/>
<dbReference type="BioGRID-ORCS" id="51517">
    <property type="hits" value="12 hits in 1156 CRISPR screens"/>
</dbReference>
<dbReference type="CD-CODE" id="FB4E32DD">
    <property type="entry name" value="Presynaptic clusters and postsynaptic densities"/>
</dbReference>
<dbReference type="ChiTaRS" id="NCKIPSD">
    <property type="organism name" value="human"/>
</dbReference>
<dbReference type="GeneWiki" id="NCKIPSD"/>
<dbReference type="GenomeRNAi" id="51517"/>
<dbReference type="Pharos" id="Q9NZQ3">
    <property type="development level" value="Tbio"/>
</dbReference>
<dbReference type="PRO" id="PR:Q9NZQ3"/>
<dbReference type="Proteomes" id="UP000005640">
    <property type="component" value="Chromosome 3"/>
</dbReference>
<dbReference type="RNAct" id="Q9NZQ3">
    <property type="molecule type" value="protein"/>
</dbReference>
<dbReference type="Bgee" id="ENSG00000213672">
    <property type="expression patterns" value="Expressed in right frontal lobe and 183 other cell types or tissues"/>
</dbReference>
<dbReference type="ExpressionAtlas" id="Q9NZQ3">
    <property type="expression patterns" value="baseline and differential"/>
</dbReference>
<dbReference type="GO" id="GO:0005829">
    <property type="term" value="C:cytosol"/>
    <property type="evidence" value="ECO:0000304"/>
    <property type="project" value="Reactome"/>
</dbReference>
<dbReference type="GO" id="GO:0098978">
    <property type="term" value="C:glutamatergic synapse"/>
    <property type="evidence" value="ECO:0007669"/>
    <property type="project" value="Ensembl"/>
</dbReference>
<dbReference type="GO" id="GO:0005882">
    <property type="term" value="C:intermediate filament"/>
    <property type="evidence" value="ECO:0000303"/>
    <property type="project" value="UniProtKB"/>
</dbReference>
<dbReference type="GO" id="GO:0005654">
    <property type="term" value="C:nucleoplasm"/>
    <property type="evidence" value="ECO:0000314"/>
    <property type="project" value="HPA"/>
</dbReference>
<dbReference type="GO" id="GO:0005886">
    <property type="term" value="C:plasma membrane"/>
    <property type="evidence" value="ECO:0000314"/>
    <property type="project" value="HPA"/>
</dbReference>
<dbReference type="GO" id="GO:0098794">
    <property type="term" value="C:postsynapse"/>
    <property type="evidence" value="ECO:0007669"/>
    <property type="project" value="Ensembl"/>
</dbReference>
<dbReference type="GO" id="GO:0071933">
    <property type="term" value="F:Arp2/3 complex binding"/>
    <property type="evidence" value="ECO:0000318"/>
    <property type="project" value="GO_Central"/>
</dbReference>
<dbReference type="GO" id="GO:0008092">
    <property type="term" value="F:cytoskeletal protein binding"/>
    <property type="evidence" value="ECO:0000303"/>
    <property type="project" value="UniProtKB"/>
</dbReference>
<dbReference type="GO" id="GO:0017124">
    <property type="term" value="F:SH3 domain binding"/>
    <property type="evidence" value="ECO:0007669"/>
    <property type="project" value="UniProtKB-KW"/>
</dbReference>
<dbReference type="GO" id="GO:0007010">
    <property type="term" value="P:cytoskeleton organization"/>
    <property type="evidence" value="ECO:0000303"/>
    <property type="project" value="UniProtKB"/>
</dbReference>
<dbReference type="GO" id="GO:0006897">
    <property type="term" value="P:endocytosis"/>
    <property type="evidence" value="ECO:0000318"/>
    <property type="project" value="GO_Central"/>
</dbReference>
<dbReference type="GO" id="GO:0010976">
    <property type="term" value="P:positive regulation of neuron projection development"/>
    <property type="evidence" value="ECO:0007669"/>
    <property type="project" value="Ensembl"/>
</dbReference>
<dbReference type="GO" id="GO:0150052">
    <property type="term" value="P:regulation of postsynapse assembly"/>
    <property type="evidence" value="ECO:0007669"/>
    <property type="project" value="Ensembl"/>
</dbReference>
<dbReference type="CDD" id="cd11849">
    <property type="entry name" value="SH3_SPIN90"/>
    <property type="match status" value="1"/>
</dbReference>
<dbReference type="Gene3D" id="2.30.30.40">
    <property type="entry name" value="SH3 Domains"/>
    <property type="match status" value="1"/>
</dbReference>
<dbReference type="InterPro" id="IPR036028">
    <property type="entry name" value="SH3-like_dom_sf"/>
</dbReference>
<dbReference type="InterPro" id="IPR001452">
    <property type="entry name" value="SH3_domain"/>
</dbReference>
<dbReference type="InterPro" id="IPR030125">
    <property type="entry name" value="SPIN90/Ldb17"/>
</dbReference>
<dbReference type="InterPro" id="IPR018556">
    <property type="entry name" value="SPIN90/Ldb17_LRD"/>
</dbReference>
<dbReference type="InterPro" id="IPR035514">
    <property type="entry name" value="SPIN90_SH3"/>
</dbReference>
<dbReference type="PANTHER" id="PTHR13357:SF1">
    <property type="entry name" value="NCK-INTERACTING PROTEIN WITH SH3 DOMAIN"/>
    <property type="match status" value="1"/>
</dbReference>
<dbReference type="PANTHER" id="PTHR13357">
    <property type="entry name" value="SH3 ADAPTER PROTEIN SPIN90 NCK INTERACTING PROTEIN WITH SH3 DOMAIN"/>
    <property type="match status" value="1"/>
</dbReference>
<dbReference type="Pfam" id="PF00018">
    <property type="entry name" value="SH3_1"/>
    <property type="match status" value="1"/>
</dbReference>
<dbReference type="Pfam" id="PF09431">
    <property type="entry name" value="SPIN90_LRD"/>
    <property type="match status" value="1"/>
</dbReference>
<dbReference type="SMART" id="SM00326">
    <property type="entry name" value="SH3"/>
    <property type="match status" value="1"/>
</dbReference>
<dbReference type="SUPFAM" id="SSF50044">
    <property type="entry name" value="SH3-domain"/>
    <property type="match status" value="1"/>
</dbReference>
<dbReference type="PROSITE" id="PS50002">
    <property type="entry name" value="SH3"/>
    <property type="match status" value="1"/>
</dbReference>